<sequence length="136" mass="15246">MGKIVITVGKRKRAIARAVAREGKGRIRINKIPIELIEPKYKRMKLMEPILLAGEEVISQMDIDVTVKGGGVMGQMDAARTAIGKAIVEFTGSKELRDKFLAYDRTLLVSDARRTEPHKPSRSTKGPRAKRQKSYR</sequence>
<dbReference type="EMBL" id="L77117">
    <property type="protein sequence ID" value="AAB98175.1"/>
    <property type="molecule type" value="Genomic_DNA"/>
</dbReference>
<dbReference type="PIR" id="D64324">
    <property type="entry name" value="D64324"/>
</dbReference>
<dbReference type="RefSeq" id="WP_010869690.1">
    <property type="nucleotide sequence ID" value="NC_000909.1"/>
</dbReference>
<dbReference type="SMR" id="P54024"/>
<dbReference type="FunCoup" id="P54024">
    <property type="interactions" value="117"/>
</dbReference>
<dbReference type="STRING" id="243232.MJ_0195"/>
<dbReference type="PaxDb" id="243232-MJ_0195"/>
<dbReference type="EnsemblBacteria" id="AAB98175">
    <property type="protein sequence ID" value="AAB98175"/>
    <property type="gene ID" value="MJ_0195"/>
</dbReference>
<dbReference type="GeneID" id="24892246"/>
<dbReference type="KEGG" id="mja:MJ_0195"/>
<dbReference type="eggNOG" id="arCOG04243">
    <property type="taxonomic scope" value="Archaea"/>
</dbReference>
<dbReference type="HOGENOM" id="CLU_046483_4_0_2"/>
<dbReference type="InParanoid" id="P54024"/>
<dbReference type="OrthoDB" id="52677at2157"/>
<dbReference type="PhylomeDB" id="P54024"/>
<dbReference type="Proteomes" id="UP000000805">
    <property type="component" value="Chromosome"/>
</dbReference>
<dbReference type="GO" id="GO:0022627">
    <property type="term" value="C:cytosolic small ribosomal subunit"/>
    <property type="evidence" value="ECO:0000318"/>
    <property type="project" value="GO_Central"/>
</dbReference>
<dbReference type="GO" id="GO:0003723">
    <property type="term" value="F:RNA binding"/>
    <property type="evidence" value="ECO:0000318"/>
    <property type="project" value="GO_Central"/>
</dbReference>
<dbReference type="GO" id="GO:0003735">
    <property type="term" value="F:structural constituent of ribosome"/>
    <property type="evidence" value="ECO:0000318"/>
    <property type="project" value="GO_Central"/>
</dbReference>
<dbReference type="GO" id="GO:0000462">
    <property type="term" value="P:maturation of SSU-rRNA from tricistronic rRNA transcript (SSU-rRNA, 5.8S rRNA, LSU-rRNA)"/>
    <property type="evidence" value="ECO:0000318"/>
    <property type="project" value="GO_Central"/>
</dbReference>
<dbReference type="GO" id="GO:0006412">
    <property type="term" value="P:translation"/>
    <property type="evidence" value="ECO:0007669"/>
    <property type="project" value="UniProtKB-UniRule"/>
</dbReference>
<dbReference type="FunFam" id="3.30.230.10:FF:000051">
    <property type="entry name" value="30S ribosomal protein S9"/>
    <property type="match status" value="1"/>
</dbReference>
<dbReference type="Gene3D" id="3.30.230.10">
    <property type="match status" value="1"/>
</dbReference>
<dbReference type="HAMAP" id="MF_00532_A">
    <property type="entry name" value="Ribosomal_uS9_A"/>
    <property type="match status" value="1"/>
</dbReference>
<dbReference type="InterPro" id="IPR020568">
    <property type="entry name" value="Ribosomal_Su5_D2-typ_SF"/>
</dbReference>
<dbReference type="InterPro" id="IPR000754">
    <property type="entry name" value="Ribosomal_uS9"/>
</dbReference>
<dbReference type="InterPro" id="IPR019958">
    <property type="entry name" value="Ribosomal_uS9_archaeal"/>
</dbReference>
<dbReference type="InterPro" id="IPR020574">
    <property type="entry name" value="Ribosomal_uS9_CS"/>
</dbReference>
<dbReference type="InterPro" id="IPR014721">
    <property type="entry name" value="Ribsml_uS5_D2-typ_fold_subgr"/>
</dbReference>
<dbReference type="NCBIfam" id="NF001749">
    <property type="entry name" value="PRK00474.1"/>
    <property type="match status" value="1"/>
</dbReference>
<dbReference type="NCBIfam" id="TIGR03627">
    <property type="entry name" value="uS9_arch"/>
    <property type="match status" value="1"/>
</dbReference>
<dbReference type="PANTHER" id="PTHR21569:SF16">
    <property type="entry name" value="RIBOSOMAL PROTEIN S16"/>
    <property type="match status" value="1"/>
</dbReference>
<dbReference type="PANTHER" id="PTHR21569">
    <property type="entry name" value="RIBOSOMAL PROTEIN S9"/>
    <property type="match status" value="1"/>
</dbReference>
<dbReference type="Pfam" id="PF00380">
    <property type="entry name" value="Ribosomal_S9"/>
    <property type="match status" value="1"/>
</dbReference>
<dbReference type="SUPFAM" id="SSF54211">
    <property type="entry name" value="Ribosomal protein S5 domain 2-like"/>
    <property type="match status" value="1"/>
</dbReference>
<dbReference type="PROSITE" id="PS00360">
    <property type="entry name" value="RIBOSOMAL_S9"/>
    <property type="match status" value="1"/>
</dbReference>
<name>RS9_METJA</name>
<organism>
    <name type="scientific">Methanocaldococcus jannaschii (strain ATCC 43067 / DSM 2661 / JAL-1 / JCM 10045 / NBRC 100440)</name>
    <name type="common">Methanococcus jannaschii</name>
    <dbReference type="NCBI Taxonomy" id="243232"/>
    <lineage>
        <taxon>Archaea</taxon>
        <taxon>Methanobacteriati</taxon>
        <taxon>Methanobacteriota</taxon>
        <taxon>Methanomada group</taxon>
        <taxon>Methanococci</taxon>
        <taxon>Methanococcales</taxon>
        <taxon>Methanocaldococcaceae</taxon>
        <taxon>Methanocaldococcus</taxon>
    </lineage>
</organism>
<proteinExistence type="inferred from homology"/>
<accession>P54024</accession>
<keyword id="KW-1185">Reference proteome</keyword>
<keyword id="KW-0687">Ribonucleoprotein</keyword>
<keyword id="KW-0689">Ribosomal protein</keyword>
<feature type="chain" id="PRO_0000111465" description="Small ribosomal subunit protein uS9">
    <location>
        <begin position="1"/>
        <end position="136"/>
    </location>
</feature>
<feature type="region of interest" description="Disordered" evidence="1">
    <location>
        <begin position="111"/>
        <end position="136"/>
    </location>
</feature>
<feature type="compositionally biased region" description="Basic residues" evidence="1">
    <location>
        <begin position="120"/>
        <end position="136"/>
    </location>
</feature>
<reference key="1">
    <citation type="journal article" date="1996" name="Science">
        <title>Complete genome sequence of the methanogenic archaeon, Methanococcus jannaschii.</title>
        <authorList>
            <person name="Bult C.J."/>
            <person name="White O."/>
            <person name="Olsen G.J."/>
            <person name="Zhou L."/>
            <person name="Fleischmann R.D."/>
            <person name="Sutton G.G."/>
            <person name="Blake J.A."/>
            <person name="FitzGerald L.M."/>
            <person name="Clayton R.A."/>
            <person name="Gocayne J.D."/>
            <person name="Kerlavage A.R."/>
            <person name="Dougherty B.A."/>
            <person name="Tomb J.-F."/>
            <person name="Adams M.D."/>
            <person name="Reich C.I."/>
            <person name="Overbeek R."/>
            <person name="Kirkness E.F."/>
            <person name="Weinstock K.G."/>
            <person name="Merrick J.M."/>
            <person name="Glodek A."/>
            <person name="Scott J.L."/>
            <person name="Geoghagen N.S.M."/>
            <person name="Weidman J.F."/>
            <person name="Fuhrmann J.L."/>
            <person name="Nguyen D."/>
            <person name="Utterback T.R."/>
            <person name="Kelley J.M."/>
            <person name="Peterson J.D."/>
            <person name="Sadow P.W."/>
            <person name="Hanna M.C."/>
            <person name="Cotton M.D."/>
            <person name="Roberts K.M."/>
            <person name="Hurst M.A."/>
            <person name="Kaine B.P."/>
            <person name="Borodovsky M."/>
            <person name="Klenk H.-P."/>
            <person name="Fraser C.M."/>
            <person name="Smith H.O."/>
            <person name="Woese C.R."/>
            <person name="Venter J.C."/>
        </authorList>
    </citation>
    <scope>NUCLEOTIDE SEQUENCE [LARGE SCALE GENOMIC DNA]</scope>
    <source>
        <strain>ATCC 43067 / DSM 2661 / JAL-1 / JCM 10045 / NBRC 100440</strain>
    </source>
</reference>
<protein>
    <recommendedName>
        <fullName evidence="2">Small ribosomal subunit protein uS9</fullName>
    </recommendedName>
    <alternativeName>
        <fullName>30S ribosomal protein S9</fullName>
    </alternativeName>
</protein>
<evidence type="ECO:0000256" key="1">
    <source>
        <dbReference type="SAM" id="MobiDB-lite"/>
    </source>
</evidence>
<evidence type="ECO:0000305" key="2"/>
<gene>
    <name type="primary">rps9</name>
    <name type="ordered locus">MJ0195</name>
</gene>
<comment type="similarity">
    <text evidence="2">Belongs to the universal ribosomal protein uS9 family.</text>
</comment>